<organism>
    <name type="scientific">Mus musculus</name>
    <name type="common">Mouse</name>
    <dbReference type="NCBI Taxonomy" id="10090"/>
    <lineage>
        <taxon>Eukaryota</taxon>
        <taxon>Metazoa</taxon>
        <taxon>Chordata</taxon>
        <taxon>Craniata</taxon>
        <taxon>Vertebrata</taxon>
        <taxon>Euteleostomi</taxon>
        <taxon>Mammalia</taxon>
        <taxon>Eutheria</taxon>
        <taxon>Euarchontoglires</taxon>
        <taxon>Glires</taxon>
        <taxon>Rodentia</taxon>
        <taxon>Myomorpha</taxon>
        <taxon>Muroidea</taxon>
        <taxon>Muridae</taxon>
        <taxon>Murinae</taxon>
        <taxon>Mus</taxon>
        <taxon>Mus</taxon>
    </lineage>
</organism>
<reference key="1">
    <citation type="journal article" date="1999" name="Mol. Biol. Cell">
        <title>Characterization of a fourth adaptor-related protein complex.</title>
        <authorList>
            <person name="Hirst J."/>
            <person name="Bright N.A."/>
            <person name="Rous B."/>
            <person name="Robinson M.S."/>
        </authorList>
    </citation>
    <scope>NUCLEOTIDE SEQUENCE [MRNA]</scope>
</reference>
<reference key="2">
    <citation type="journal article" date="2009" name="PLoS Biol.">
        <title>Lineage-specific biology revealed by a finished genome assembly of the mouse.</title>
        <authorList>
            <person name="Church D.M."/>
            <person name="Goodstadt L."/>
            <person name="Hillier L.W."/>
            <person name="Zody M.C."/>
            <person name="Goldstein S."/>
            <person name="She X."/>
            <person name="Bult C.J."/>
            <person name="Agarwala R."/>
            <person name="Cherry J.L."/>
            <person name="DiCuccio M."/>
            <person name="Hlavina W."/>
            <person name="Kapustin Y."/>
            <person name="Meric P."/>
            <person name="Maglott D."/>
            <person name="Birtle Z."/>
            <person name="Marques A.C."/>
            <person name="Graves T."/>
            <person name="Zhou S."/>
            <person name="Teague B."/>
            <person name="Potamousis K."/>
            <person name="Churas C."/>
            <person name="Place M."/>
            <person name="Herschleb J."/>
            <person name="Runnheim R."/>
            <person name="Forrest D."/>
            <person name="Amos-Landgraf J."/>
            <person name="Schwartz D.C."/>
            <person name="Cheng Z."/>
            <person name="Lindblad-Toh K."/>
            <person name="Eichler E.E."/>
            <person name="Ponting C.P."/>
        </authorList>
    </citation>
    <scope>NUCLEOTIDE SEQUENCE [LARGE SCALE GENOMIC DNA]</scope>
    <source>
        <strain>C57BL/6J</strain>
    </source>
</reference>
<reference key="3">
    <citation type="journal article" date="2008" name="Neuron">
        <title>Accumulation of AMPA receptors in autophagosomes in neuronal axons lacking adaptor protein AP-4.</title>
        <authorList>
            <person name="Matsuda S."/>
            <person name="Miura E."/>
            <person name="Matsuda K."/>
            <person name="Kakegawa W."/>
            <person name="Kohda K."/>
            <person name="Watanabe M."/>
            <person name="Yuzaki M."/>
        </authorList>
    </citation>
    <scope>FUNCTION</scope>
    <scope>DISRUPTION PHENOTYPE</scope>
    <scope>INTERACTION WITH GRIA2</scope>
</reference>
<reference key="4">
    <citation type="journal article" date="2010" name="Cell">
        <title>A tissue-specific atlas of mouse protein phosphorylation and expression.</title>
        <authorList>
            <person name="Huttlin E.L."/>
            <person name="Jedrychowski M.P."/>
            <person name="Elias J.E."/>
            <person name="Goswami T."/>
            <person name="Rad R."/>
            <person name="Beausoleil S.A."/>
            <person name="Villen J."/>
            <person name="Haas W."/>
            <person name="Sowa M.E."/>
            <person name="Gygi S.P."/>
        </authorList>
    </citation>
    <scope>IDENTIFICATION BY MASS SPECTROMETRY [LARGE SCALE ANALYSIS]</scope>
    <source>
        <tissue>Brain</tissue>
        <tissue>Lung</tissue>
        <tissue>Spleen</tissue>
        <tissue>Testis</tissue>
    </source>
</reference>
<protein>
    <recommendedName>
        <fullName evidence="3">AP-4 complex subunit beta-1</fullName>
    </recommendedName>
    <alternativeName>
        <fullName>AP-4 adaptor complex subunit beta</fullName>
    </alternativeName>
    <alternativeName>
        <fullName>Adaptor-related protein complex 4 subunit beta-1</fullName>
    </alternativeName>
    <alternativeName>
        <fullName>Beta subunit of AP-4</fullName>
    </alternativeName>
    <alternativeName>
        <fullName>Beta4-adaptin</fullName>
    </alternativeName>
</protein>
<comment type="function">
    <text evidence="1 2">Component of the adaptor protein complex 4 (AP-4). Adaptor protein complexes are vesicle coat components involved both in vesicle formation and cargo selection. They control the vesicular transport of proteins in different trafficking pathways. AP-4 forms a non clathrin-associated coat on vesicles departing the trans-Golgi network (TGN) and may be involved in the targeting of proteins from the trans-Golgi network (TGN) to the endosomal-lysosomal system (By similarity). It is also involved in protein sorting to the basolateral membrane in epithelial cells and the proper asymmetric localization of somatodendritic proteins in neurons (PubMed:18341993). AP-4 is involved in the recognition and binding of tyrosine-based sorting signals found in the cytoplasmic part of cargos, but may also recognize other types of sorting signal (By similarity).</text>
</comment>
<comment type="subunit">
    <text evidence="1 2">Adaptor protein complex 4 (AP-4) is a heterotetramer composed of two large adaptins (epsilon-type subunit AP4E1 and beta-type subunit AP4B1), a medium adaptin (mu-type subunit AP4M1) and a small adaptin (sigma-type AP4S1). Interacts with TEPSIN; this interaction requires the presence of a functional AP-4 complex (By similarity). Interacts with GRIA2; probably indirect it mediates the somatodendritic localization of GRIA2 in neurons (PubMed:18341993).</text>
</comment>
<comment type="subcellular location">
    <subcellularLocation>
        <location evidence="1">Golgi apparatus</location>
        <location evidence="1">trans-Golgi network membrane</location>
        <topology evidence="1">Peripheral membrane protein</topology>
    </subcellularLocation>
</comment>
<comment type="disruption phenotype">
    <text evidence="2">Mice lacking Ap4b1 are fertile, have no overt anatomical abnormalities and have normal life spans. They only show a significantly poorer rotorod performance than wild-type mice. No significant differences in body weight or grip power is observed compared to wild-type mice. The cerebella has normal foliation and a normal laminated cortical structure. Main neuronal types are present in the cerebella and the gross morphology of the soma and dendrites of Purkinje cells is normal.</text>
</comment>
<comment type="similarity">
    <text evidence="3">Belongs to the adaptor complexes large subunit family.</text>
</comment>
<sequence length="738" mass="82976">MPYLGSEDVVKELKKALCNPHIQADRLRYRNVIQRVIRHMTQGLDMSDVFMEMVKASATVDIVQKKLVYLYMGTYAPLKPDLALLAINTLCKDCSDPNPMVRGLALRSMCSLRMPGVQEYIQQPVVNGLRDKASYVRRVAVLGCAKMHNLHGDSEVDGALVNELYSLLRDQDPIVVVNCLRSLEEILKQEGGVVINKPIAHHLLNRMSKLDQWGQAEVLNFLLRYQPRSEEELFDILNLLDSYLKSSSTGVVMGATKLFLILAKKFPHVQTDVLVRVKGPLLAACSSESRELCFAALCHVRQVLHSLPGHFSSHYKKFFCSYSEPHYIKLQKVEVLCELVNDENVQQVLEELRGYCTDVAADFAQAAIFAIGSIAKTYTDQCVQILTELLGLRQEHITTVVVQTFRDLVWLCPQCTEAVCQALPGCEENIQDSEGKQALIWLLGVHGEKIPNAPYVLEDFVDNVKSETFPAVKMELLTALMRLVLSRPAECQDMLGRLLHYCIEEEKDMAVRDRGLFYYRLLLVGIDKVKQILCSPKSDPSLGLLEDQPERPVNSWASDFNTLAPVYGRAHWATISKCQQVERHRLELPHNASFATSGHLISEENKEGAQEPDSDTLMLVPNLQLTAEYFEKTWLSLRVSYQQVFPWQGEVQPDTLQMALKVVNIQTIAMSRAGAQPWKAYLSAQDDTGGLFLAELLLKPENSEMQISVKQSKARTESLHGFVSVLETVIGTVGDIKS</sequence>
<accession>Q9WV76</accession>
<accession>B0V3P2</accession>
<evidence type="ECO:0000250" key="1">
    <source>
        <dbReference type="UniProtKB" id="Q9Y6B7"/>
    </source>
</evidence>
<evidence type="ECO:0000269" key="2">
    <source>
    </source>
</evidence>
<evidence type="ECO:0000305" key="3"/>
<evidence type="ECO:0000312" key="4">
    <source>
        <dbReference type="MGI" id="MGI:1337130"/>
    </source>
</evidence>
<proteinExistence type="evidence at protein level"/>
<gene>
    <name evidence="4" type="primary">Ap4b1</name>
</gene>
<keyword id="KW-0333">Golgi apparatus</keyword>
<keyword id="KW-0472">Membrane</keyword>
<keyword id="KW-0653">Protein transport</keyword>
<keyword id="KW-1185">Reference proteome</keyword>
<keyword id="KW-0813">Transport</keyword>
<name>AP4B1_MOUSE</name>
<dbReference type="EMBL" id="AF155157">
    <property type="protein sequence ID" value="AAD43327.1"/>
    <property type="molecule type" value="mRNA"/>
</dbReference>
<dbReference type="EMBL" id="AC124698">
    <property type="status" value="NOT_ANNOTATED_CDS"/>
    <property type="molecule type" value="Genomic_DNA"/>
</dbReference>
<dbReference type="EMBL" id="CU210953">
    <property type="status" value="NOT_ANNOTATED_CDS"/>
    <property type="molecule type" value="Genomic_DNA"/>
</dbReference>
<dbReference type="CCDS" id="CCDS17696.1"/>
<dbReference type="RefSeq" id="NP_001157024.1">
    <property type="nucleotide sequence ID" value="NM_001163552.1"/>
</dbReference>
<dbReference type="RefSeq" id="NP_080469.2">
    <property type="nucleotide sequence ID" value="NM_026193.2"/>
</dbReference>
<dbReference type="RefSeq" id="XP_036019138.1">
    <property type="nucleotide sequence ID" value="XM_036163245.1"/>
</dbReference>
<dbReference type="RefSeq" id="XP_036019139.1">
    <property type="nucleotide sequence ID" value="XM_036163246.1"/>
</dbReference>
<dbReference type="SMR" id="Q9WV76"/>
<dbReference type="BioGRID" id="212225">
    <property type="interactions" value="1"/>
</dbReference>
<dbReference type="ComplexPortal" id="CPX-5154">
    <property type="entry name" value="AP-4 Adaptor complex"/>
</dbReference>
<dbReference type="FunCoup" id="Q9WV76">
    <property type="interactions" value="1751"/>
</dbReference>
<dbReference type="IntAct" id="Q9WV76">
    <property type="interactions" value="1"/>
</dbReference>
<dbReference type="MINT" id="Q9WV76"/>
<dbReference type="STRING" id="10090.ENSMUSP00000044262"/>
<dbReference type="iPTMnet" id="Q9WV76"/>
<dbReference type="PhosphoSitePlus" id="Q9WV76"/>
<dbReference type="jPOST" id="Q9WV76"/>
<dbReference type="PaxDb" id="10090-ENSMUSP00000044262"/>
<dbReference type="ProteomicsDB" id="281787"/>
<dbReference type="Pumba" id="Q9WV76"/>
<dbReference type="DNASU" id="67489"/>
<dbReference type="Ensembl" id="ENSMUST00000047285.7">
    <property type="protein sequence ID" value="ENSMUSP00000044262.3"/>
    <property type="gene ID" value="ENSMUSG00000032952.12"/>
</dbReference>
<dbReference type="Ensembl" id="ENSMUST00000076599.8">
    <property type="protein sequence ID" value="ENSMUSP00000075904.2"/>
    <property type="gene ID" value="ENSMUSG00000032952.12"/>
</dbReference>
<dbReference type="GeneID" id="67489"/>
<dbReference type="KEGG" id="mmu:67489"/>
<dbReference type="UCSC" id="uc008qtq.2">
    <property type="organism name" value="mouse"/>
</dbReference>
<dbReference type="AGR" id="MGI:1337130"/>
<dbReference type="CTD" id="10717"/>
<dbReference type="MGI" id="MGI:1337130">
    <property type="gene designation" value="Ap4b1"/>
</dbReference>
<dbReference type="VEuPathDB" id="HostDB:ENSMUSG00000032952"/>
<dbReference type="eggNOG" id="KOG1061">
    <property type="taxonomic scope" value="Eukaryota"/>
</dbReference>
<dbReference type="GeneTree" id="ENSGT00940000157025"/>
<dbReference type="InParanoid" id="Q9WV76"/>
<dbReference type="OMA" id="FIQRPTR"/>
<dbReference type="OrthoDB" id="10254310at2759"/>
<dbReference type="PhylomeDB" id="Q9WV76"/>
<dbReference type="TreeFam" id="TF354235"/>
<dbReference type="Reactome" id="R-MMU-432720">
    <property type="pathway name" value="Lysosome Vesicle Biogenesis"/>
</dbReference>
<dbReference type="Reactome" id="R-MMU-432722">
    <property type="pathway name" value="Golgi Associated Vesicle Biogenesis"/>
</dbReference>
<dbReference type="BioGRID-ORCS" id="67489">
    <property type="hits" value="3 hits in 77 CRISPR screens"/>
</dbReference>
<dbReference type="ChiTaRS" id="Ap4b1">
    <property type="organism name" value="mouse"/>
</dbReference>
<dbReference type="PRO" id="PR:Q9WV76"/>
<dbReference type="Proteomes" id="UP000000589">
    <property type="component" value="Chromosome 3"/>
</dbReference>
<dbReference type="RNAct" id="Q9WV76">
    <property type="molecule type" value="protein"/>
</dbReference>
<dbReference type="Bgee" id="ENSMUSG00000032952">
    <property type="expression patterns" value="Expressed in spermatocyte and 65 other cell types or tissues"/>
</dbReference>
<dbReference type="ExpressionAtlas" id="Q9WV76">
    <property type="expression patterns" value="baseline and differential"/>
</dbReference>
<dbReference type="GO" id="GO:0030124">
    <property type="term" value="C:AP-4 adaptor complex"/>
    <property type="evidence" value="ECO:0000250"/>
    <property type="project" value="UniProtKB"/>
</dbReference>
<dbReference type="GO" id="GO:0030131">
    <property type="term" value="C:clathrin adaptor complex"/>
    <property type="evidence" value="ECO:0007669"/>
    <property type="project" value="InterPro"/>
</dbReference>
<dbReference type="GO" id="GO:0098541">
    <property type="term" value="C:cytoplasmic side of trans-Golgi network transport vesicle membrane"/>
    <property type="evidence" value="ECO:0000250"/>
    <property type="project" value="UniProtKB"/>
</dbReference>
<dbReference type="GO" id="GO:0005829">
    <property type="term" value="C:cytosol"/>
    <property type="evidence" value="ECO:0000250"/>
    <property type="project" value="UniProtKB"/>
</dbReference>
<dbReference type="GO" id="GO:0005802">
    <property type="term" value="C:trans-Golgi network"/>
    <property type="evidence" value="ECO:0000314"/>
    <property type="project" value="MGI"/>
</dbReference>
<dbReference type="GO" id="GO:0030276">
    <property type="term" value="F:clathrin binding"/>
    <property type="evidence" value="ECO:0007669"/>
    <property type="project" value="InterPro"/>
</dbReference>
<dbReference type="GO" id="GO:0006886">
    <property type="term" value="P:intracellular protein transport"/>
    <property type="evidence" value="ECO:0000304"/>
    <property type="project" value="MGI"/>
</dbReference>
<dbReference type="GO" id="GO:0061938">
    <property type="term" value="P:protein localization to somatodendritic compartment"/>
    <property type="evidence" value="ECO:0000315"/>
    <property type="project" value="UniProtKB"/>
</dbReference>
<dbReference type="GO" id="GO:0006605">
    <property type="term" value="P:protein targeting"/>
    <property type="evidence" value="ECO:0000315"/>
    <property type="project" value="UniProtKB"/>
</dbReference>
<dbReference type="GO" id="GO:0016192">
    <property type="term" value="P:vesicle-mediated transport"/>
    <property type="evidence" value="ECO:0000304"/>
    <property type="project" value="MGI"/>
</dbReference>
<dbReference type="FunFam" id="1.25.10.10:FF:000151">
    <property type="entry name" value="AP complex subunit beta"/>
    <property type="match status" value="1"/>
</dbReference>
<dbReference type="FunFam" id="3.30.310.10:FF:000013">
    <property type="entry name" value="AP complex subunit beta"/>
    <property type="match status" value="1"/>
</dbReference>
<dbReference type="Gene3D" id="1.25.10.10">
    <property type="entry name" value="Leucine-rich Repeat Variant"/>
    <property type="match status" value="1"/>
</dbReference>
<dbReference type="Gene3D" id="3.30.310.10">
    <property type="entry name" value="TATA-Binding Protein"/>
    <property type="match status" value="1"/>
</dbReference>
<dbReference type="InterPro" id="IPR026739">
    <property type="entry name" value="AP_beta"/>
</dbReference>
<dbReference type="InterPro" id="IPR016342">
    <property type="entry name" value="AP_complex_bsu_1_2_4"/>
</dbReference>
<dbReference type="InterPro" id="IPR011989">
    <property type="entry name" value="ARM-like"/>
</dbReference>
<dbReference type="InterPro" id="IPR016024">
    <property type="entry name" value="ARM-type_fold"/>
</dbReference>
<dbReference type="InterPro" id="IPR015151">
    <property type="entry name" value="B-adaptin_app_sub_C"/>
</dbReference>
<dbReference type="InterPro" id="IPR002553">
    <property type="entry name" value="Clathrin/coatomer_adapt-like_N"/>
</dbReference>
<dbReference type="InterPro" id="IPR012295">
    <property type="entry name" value="TBP_dom_sf"/>
</dbReference>
<dbReference type="PANTHER" id="PTHR11134">
    <property type="entry name" value="ADAPTOR COMPLEX SUBUNIT BETA FAMILY MEMBER"/>
    <property type="match status" value="1"/>
</dbReference>
<dbReference type="Pfam" id="PF01602">
    <property type="entry name" value="Adaptin_N"/>
    <property type="match status" value="1"/>
</dbReference>
<dbReference type="Pfam" id="PF09066">
    <property type="entry name" value="B2-adapt-app_C"/>
    <property type="match status" value="1"/>
</dbReference>
<dbReference type="PIRSF" id="PIRSF002291">
    <property type="entry name" value="AP_complex_beta"/>
    <property type="match status" value="1"/>
</dbReference>
<dbReference type="SMART" id="SM01020">
    <property type="entry name" value="B2-adapt-app_C"/>
    <property type="match status" value="1"/>
</dbReference>
<dbReference type="SUPFAM" id="SSF48371">
    <property type="entry name" value="ARM repeat"/>
    <property type="match status" value="1"/>
</dbReference>
<feature type="chain" id="PRO_0000193751" description="AP-4 complex subunit beta-1">
    <location>
        <begin position="1"/>
        <end position="738"/>
    </location>
</feature>
<feature type="region of interest" description="Hinge" evidence="1">
    <location>
        <begin position="534"/>
        <end position="600"/>
    </location>
</feature>
<feature type="region of interest" description="Ear; mediates interaction with TEPSIN" evidence="1">
    <location>
        <begin position="601"/>
        <end position="738"/>
    </location>
</feature>
<feature type="sequence conflict" description="In Ref. 1; AAD43327." evidence="3" ref="1">
    <original>R</original>
    <variation>L</variation>
    <location>
        <position position="228"/>
    </location>
</feature>
<feature type="sequence conflict" description="In Ref. 1; AAD43327." evidence="3" ref="1">
    <original>A</original>
    <variation>S</variation>
    <location>
        <position position="360"/>
    </location>
</feature>
<feature type="sequence conflict" description="In Ref. 1; AAD43327." evidence="3" ref="1">
    <original>S</original>
    <variation>N</variation>
    <location>
        <position position="373"/>
    </location>
</feature>
<feature type="sequence conflict" description="In Ref. 1; AAD43327." evidence="3" ref="1">
    <original>DN</original>
    <variation>QS</variation>
    <location>
        <begin position="462"/>
        <end position="463"/>
    </location>
</feature>
<feature type="sequence conflict" description="In Ref. 1; AAD43327." evidence="3" ref="1">
    <original>V</original>
    <variation>F</variation>
    <location>
        <position position="484"/>
    </location>
</feature>
<feature type="sequence conflict" description="In Ref. 1; AAD43327." evidence="3" ref="1">
    <original>M</original>
    <variation>V</variation>
    <location>
        <position position="494"/>
    </location>
</feature>
<feature type="sequence conflict" description="In Ref. 1; AAD43327." evidence="3" ref="1">
    <original>H</original>
    <variation>L</variation>
    <location>
        <position position="500"/>
    </location>
</feature>
<feature type="sequence conflict" description="In Ref. 1; AAD43327." evidence="3" ref="1">
    <original>E</original>
    <variation>Q</variation>
    <location>
        <position position="504"/>
    </location>
</feature>
<feature type="sequence conflict" description="In Ref. 1; AAD43327." evidence="3" ref="1">
    <original>V</original>
    <variation>T</variation>
    <location>
        <position position="529"/>
    </location>
</feature>
<feature type="sequence conflict" description="In Ref. 1; AAD43327." evidence="3" ref="1">
    <original>L</original>
    <variation>S</variation>
    <location>
        <position position="545"/>
    </location>
</feature>
<feature type="sequence conflict" description="In Ref. 1; AAD43327." evidence="3" ref="1">
    <original>R</original>
    <variation>K</variation>
    <location>
        <position position="569"/>
    </location>
</feature>
<feature type="sequence conflict" description="In Ref. 1; AAD43327." evidence="3" ref="1">
    <original>QVER</original>
    <variation>KIEP</variation>
    <location>
        <begin position="580"/>
        <end position="583"/>
    </location>
</feature>
<feature type="sequence conflict" description="In Ref. 1; AAD43327." evidence="3" ref="1">
    <original>S</original>
    <variation>A</variation>
    <location>
        <position position="602"/>
    </location>
</feature>
<feature type="sequence conflict" description="In Ref. 1; AAD43327." evidence="3" ref="1">
    <original>E</original>
    <variation>EP</variation>
    <location>
        <position position="611"/>
    </location>
</feature>
<feature type="sequence conflict" description="In Ref. 1; AAD43327." evidence="3" ref="1">
    <original>DTLM</original>
    <variation>GALV</variation>
    <location>
        <begin position="615"/>
        <end position="618"/>
    </location>
</feature>
<feature type="sequence conflict" description="In Ref. 1; AAD43327." evidence="3" ref="1">
    <original>Y</original>
    <variation>C</variation>
    <location>
        <position position="629"/>
    </location>
</feature>
<feature type="sequence conflict" description="In Ref. 1; AAD43327." evidence="3" ref="1">
    <original>R</original>
    <variation>T</variation>
    <location>
        <position position="638"/>
    </location>
</feature>
<feature type="sequence conflict" description="In Ref. 1; AAD43327." evidence="3" ref="1">
    <original>Q</original>
    <variation>H</variation>
    <location>
        <position position="642"/>
    </location>
</feature>
<feature type="sequence conflict" description="In Ref. 1; AAD43327." evidence="3" ref="1">
    <original>F</original>
    <variation>L</variation>
    <location>
        <position position="645"/>
    </location>
</feature>
<feature type="sequence conflict" description="In Ref. 1; AAD43327." evidence="3" ref="1">
    <original>RA</original>
    <variation>KP</variation>
    <location>
        <begin position="672"/>
        <end position="673"/>
    </location>
</feature>
<feature type="sequence conflict" description="In Ref. 1; AAD43327." evidence="3" ref="1">
    <original>D</original>
    <variation>G</variation>
    <location>
        <position position="687"/>
    </location>
</feature>
<feature type="sequence conflict" description="In Ref. 1; AAD43327." evidence="3" ref="1">
    <original>A</original>
    <variation>T</variation>
    <location>
        <position position="694"/>
    </location>
</feature>
<feature type="sequence conflict" description="In Ref. 1; AAD43327." evidence="3" ref="1">
    <original>M</original>
    <variation>V</variation>
    <location>
        <position position="705"/>
    </location>
</feature>
<feature type="sequence conflict" description="In Ref. 1; AAD43327." evidence="3" ref="1">
    <original>K</original>
    <variation>E</variation>
    <location>
        <position position="713"/>
    </location>
</feature>
<feature type="sequence conflict" description="In Ref. 1; AAD43327." evidence="3" ref="1">
    <original>SLH</original>
    <variation>ALR</variation>
    <location>
        <begin position="718"/>
        <end position="720"/>
    </location>
</feature>